<protein>
    <recommendedName>
        <fullName evidence="1">Translation factor GUF1 homolog, mitochondrial</fullName>
        <ecNumber>3.6.5.-</ecNumber>
    </recommendedName>
    <alternativeName>
        <fullName evidence="1">Elongation factor 4 homolog</fullName>
        <shortName evidence="1">EF-4</shortName>
    </alternativeName>
    <alternativeName>
        <fullName evidence="1">GTPase GUF1 homolog</fullName>
    </alternativeName>
    <alternativeName>
        <fullName evidence="1">Ribosomal back-translocase</fullName>
    </alternativeName>
</protein>
<keyword id="KW-0342">GTP-binding</keyword>
<keyword id="KW-0378">Hydrolase</keyword>
<keyword id="KW-0472">Membrane</keyword>
<keyword id="KW-0496">Mitochondrion</keyword>
<keyword id="KW-0999">Mitochondrion inner membrane</keyword>
<keyword id="KW-0547">Nucleotide-binding</keyword>
<keyword id="KW-0648">Protein biosynthesis</keyword>
<keyword id="KW-1185">Reference proteome</keyword>
<name>GUF1_RICCO</name>
<evidence type="ECO:0000255" key="1">
    <source>
        <dbReference type="HAMAP-Rule" id="MF_03137"/>
    </source>
</evidence>
<evidence type="ECO:0000305" key="2"/>
<gene>
    <name type="ORF">RCOM_0855130</name>
</gene>
<sequence>MGFSHGVSKTLKSPKSLSLLRSYYSKFNPYPSIFGLNDHRFGLIKHDYCSNTRKENINPIDLSKYPTERIRNFSIIAHVDHGKSTLADRLLELTGTIKRGHGQPQYLDKLQVERERGITVKAQTATMFHKYNFHGPNIGDAHEPPTFLLNLIDTPGHVDFSYEVSRSLAACQGALLVVDAAQGVQAQTVANFYLAFESNLTVIPVINKIDQPTADPDRVKAQLKSMFDLEPSDCLLTSAKTGQGLEQVLPAVIERIPSPPGYSNSPLRMLLLDSYYDEYKGVICHVAVVDGMLRKGDKISSAATGHSYEILDVGFMHPELTPTGILLTGQVGYVVSGMRSTKEARVGDTLYHSRTSVEPLPGFKPAKHMVFSGLYPADGSDFDALNHAIERLTCNDASVSVTKESSSALGLGFRCGFLGLLHMDVFHQRLEQEYGAHVISTVPTVPYIFEYSDGSKVQVQNPAALPSNPKKRVTASWEPTVVATIIIPSEYVGPVITLCSERRGQQLEYSFIDSQRAFMKYRLPLREIVVDFYNELKSITSGYASFDYEDSEYQEAELVKLDILLNGQPVDAMATIVHNLKAQRVGRELVDKLKKFIDRQMFEITIQAAIGSKVVARETISAMRKNVLAKCYGGDVTRKRKLLEKQKEGKKRMKRVGSVDIPQEAFHELLKVS</sequence>
<dbReference type="EC" id="3.6.5.-"/>
<dbReference type="EMBL" id="EQ973817">
    <property type="protein sequence ID" value="EEF45025.1"/>
    <property type="molecule type" value="Genomic_DNA"/>
</dbReference>
<dbReference type="RefSeq" id="XP_002517483.1">
    <property type="nucleotide sequence ID" value="XM_002517437.2"/>
</dbReference>
<dbReference type="RefSeq" id="XP_015573704.1">
    <property type="nucleotide sequence ID" value="XM_015718218.1"/>
</dbReference>
<dbReference type="RefSeq" id="XP_015573705.1">
    <property type="nucleotide sequence ID" value="XM_015718219.1"/>
</dbReference>
<dbReference type="RefSeq" id="XP_015573706.1">
    <property type="nucleotide sequence ID" value="XM_015718220.1"/>
</dbReference>
<dbReference type="SMR" id="B9RUN8"/>
<dbReference type="FunCoup" id="B9RUN8">
    <property type="interactions" value="2695"/>
</dbReference>
<dbReference type="STRING" id="3988.B9RUN8"/>
<dbReference type="KEGG" id="rcu:8276038"/>
<dbReference type="eggNOG" id="KOG0462">
    <property type="taxonomic scope" value="Eukaryota"/>
</dbReference>
<dbReference type="InParanoid" id="B9RUN8"/>
<dbReference type="OrthoDB" id="1074at2759"/>
<dbReference type="Proteomes" id="UP000008311">
    <property type="component" value="Unassembled WGS sequence"/>
</dbReference>
<dbReference type="GO" id="GO:0005743">
    <property type="term" value="C:mitochondrial inner membrane"/>
    <property type="evidence" value="ECO:0007669"/>
    <property type="project" value="UniProtKB-SubCell"/>
</dbReference>
<dbReference type="GO" id="GO:0005759">
    <property type="term" value="C:mitochondrial matrix"/>
    <property type="evidence" value="ECO:0007669"/>
    <property type="project" value="UniProtKB-UniRule"/>
</dbReference>
<dbReference type="GO" id="GO:0005739">
    <property type="term" value="C:mitochondrion"/>
    <property type="evidence" value="ECO:0000318"/>
    <property type="project" value="GO_Central"/>
</dbReference>
<dbReference type="GO" id="GO:0005525">
    <property type="term" value="F:GTP binding"/>
    <property type="evidence" value="ECO:0007669"/>
    <property type="project" value="UniProtKB-UniRule"/>
</dbReference>
<dbReference type="GO" id="GO:0003924">
    <property type="term" value="F:GTPase activity"/>
    <property type="evidence" value="ECO:0007669"/>
    <property type="project" value="UniProtKB-UniRule"/>
</dbReference>
<dbReference type="GO" id="GO:0097177">
    <property type="term" value="F:mitochondrial ribosome binding"/>
    <property type="evidence" value="ECO:0000318"/>
    <property type="project" value="GO_Central"/>
</dbReference>
<dbReference type="GO" id="GO:0045727">
    <property type="term" value="P:positive regulation of translation"/>
    <property type="evidence" value="ECO:0000318"/>
    <property type="project" value="GO_Central"/>
</dbReference>
<dbReference type="GO" id="GO:0006412">
    <property type="term" value="P:translation"/>
    <property type="evidence" value="ECO:0007669"/>
    <property type="project" value="UniProtKB-KW"/>
</dbReference>
<dbReference type="CDD" id="cd03699">
    <property type="entry name" value="EF4_II"/>
    <property type="match status" value="1"/>
</dbReference>
<dbReference type="CDD" id="cd16260">
    <property type="entry name" value="EF4_III"/>
    <property type="match status" value="1"/>
</dbReference>
<dbReference type="CDD" id="cd01890">
    <property type="entry name" value="LepA"/>
    <property type="match status" value="1"/>
</dbReference>
<dbReference type="CDD" id="cd03709">
    <property type="entry name" value="lepA_C"/>
    <property type="match status" value="1"/>
</dbReference>
<dbReference type="FunFam" id="3.40.50.300:FF:000078">
    <property type="entry name" value="Elongation factor 4"/>
    <property type="match status" value="1"/>
</dbReference>
<dbReference type="FunFam" id="2.40.30.10:FF:000015">
    <property type="entry name" value="Translation factor GUF1, mitochondrial"/>
    <property type="match status" value="1"/>
</dbReference>
<dbReference type="FunFam" id="3.30.70.240:FF:000007">
    <property type="entry name" value="Translation factor GUF1, mitochondrial"/>
    <property type="match status" value="1"/>
</dbReference>
<dbReference type="FunFam" id="3.30.70.2570:FF:000001">
    <property type="entry name" value="Translation factor GUF1, mitochondrial"/>
    <property type="match status" value="1"/>
</dbReference>
<dbReference type="FunFam" id="3.30.70.870:FF:000004">
    <property type="entry name" value="Translation factor GUF1, mitochondrial"/>
    <property type="match status" value="1"/>
</dbReference>
<dbReference type="Gene3D" id="3.30.70.240">
    <property type="match status" value="1"/>
</dbReference>
<dbReference type="Gene3D" id="3.30.70.2570">
    <property type="entry name" value="Elongation factor 4, C-terminal domain"/>
    <property type="match status" value="1"/>
</dbReference>
<dbReference type="Gene3D" id="3.30.70.870">
    <property type="entry name" value="Elongation Factor G (Translational Gtpase), domain 3"/>
    <property type="match status" value="1"/>
</dbReference>
<dbReference type="Gene3D" id="3.40.50.300">
    <property type="entry name" value="P-loop containing nucleotide triphosphate hydrolases"/>
    <property type="match status" value="1"/>
</dbReference>
<dbReference type="Gene3D" id="2.40.30.10">
    <property type="entry name" value="Translation factors"/>
    <property type="match status" value="1"/>
</dbReference>
<dbReference type="HAMAP" id="MF_00071">
    <property type="entry name" value="LepA"/>
    <property type="match status" value="1"/>
</dbReference>
<dbReference type="InterPro" id="IPR006297">
    <property type="entry name" value="EF-4"/>
</dbReference>
<dbReference type="InterPro" id="IPR035647">
    <property type="entry name" value="EFG_III/V"/>
</dbReference>
<dbReference type="InterPro" id="IPR000640">
    <property type="entry name" value="EFG_V-like"/>
</dbReference>
<dbReference type="InterPro" id="IPR031157">
    <property type="entry name" value="G_TR_CS"/>
</dbReference>
<dbReference type="InterPro" id="IPR038363">
    <property type="entry name" value="LepA_C_sf"/>
</dbReference>
<dbReference type="InterPro" id="IPR013842">
    <property type="entry name" value="LepA_CTD"/>
</dbReference>
<dbReference type="InterPro" id="IPR035654">
    <property type="entry name" value="LepA_IV"/>
</dbReference>
<dbReference type="InterPro" id="IPR027417">
    <property type="entry name" value="P-loop_NTPase"/>
</dbReference>
<dbReference type="InterPro" id="IPR005225">
    <property type="entry name" value="Small_GTP-bd"/>
</dbReference>
<dbReference type="InterPro" id="IPR000795">
    <property type="entry name" value="T_Tr_GTP-bd_dom"/>
</dbReference>
<dbReference type="InterPro" id="IPR009000">
    <property type="entry name" value="Transl_B-barrel_sf"/>
</dbReference>
<dbReference type="NCBIfam" id="TIGR01393">
    <property type="entry name" value="lepA"/>
    <property type="match status" value="1"/>
</dbReference>
<dbReference type="NCBIfam" id="TIGR00231">
    <property type="entry name" value="small_GTP"/>
    <property type="match status" value="1"/>
</dbReference>
<dbReference type="PANTHER" id="PTHR43512:SF7">
    <property type="entry name" value="TRANSLATION FACTOR GUF1, MITOCHONDRIAL"/>
    <property type="match status" value="1"/>
</dbReference>
<dbReference type="PANTHER" id="PTHR43512">
    <property type="entry name" value="TRANSLATION FACTOR GUF1-RELATED"/>
    <property type="match status" value="1"/>
</dbReference>
<dbReference type="Pfam" id="PF00679">
    <property type="entry name" value="EFG_C"/>
    <property type="match status" value="1"/>
</dbReference>
<dbReference type="Pfam" id="PF00009">
    <property type="entry name" value="GTP_EFTU"/>
    <property type="match status" value="1"/>
</dbReference>
<dbReference type="Pfam" id="PF06421">
    <property type="entry name" value="LepA_C"/>
    <property type="match status" value="1"/>
</dbReference>
<dbReference type="PRINTS" id="PR00315">
    <property type="entry name" value="ELONGATNFCT"/>
</dbReference>
<dbReference type="SUPFAM" id="SSF54980">
    <property type="entry name" value="EF-G C-terminal domain-like"/>
    <property type="match status" value="2"/>
</dbReference>
<dbReference type="SUPFAM" id="SSF52540">
    <property type="entry name" value="P-loop containing nucleoside triphosphate hydrolases"/>
    <property type="match status" value="1"/>
</dbReference>
<dbReference type="SUPFAM" id="SSF50447">
    <property type="entry name" value="Translation proteins"/>
    <property type="match status" value="1"/>
</dbReference>
<dbReference type="PROSITE" id="PS00301">
    <property type="entry name" value="G_TR_1"/>
    <property type="match status" value="1"/>
</dbReference>
<dbReference type="PROSITE" id="PS51722">
    <property type="entry name" value="G_TR_2"/>
    <property type="match status" value="1"/>
</dbReference>
<proteinExistence type="inferred from homology"/>
<accession>B9RUN8</accession>
<organism>
    <name type="scientific">Ricinus communis</name>
    <name type="common">Castor bean</name>
    <dbReference type="NCBI Taxonomy" id="3988"/>
    <lineage>
        <taxon>Eukaryota</taxon>
        <taxon>Viridiplantae</taxon>
        <taxon>Streptophyta</taxon>
        <taxon>Embryophyta</taxon>
        <taxon>Tracheophyta</taxon>
        <taxon>Spermatophyta</taxon>
        <taxon>Magnoliopsida</taxon>
        <taxon>eudicotyledons</taxon>
        <taxon>Gunneridae</taxon>
        <taxon>Pentapetalae</taxon>
        <taxon>rosids</taxon>
        <taxon>fabids</taxon>
        <taxon>Malpighiales</taxon>
        <taxon>Euphorbiaceae</taxon>
        <taxon>Acalyphoideae</taxon>
        <taxon>Acalypheae</taxon>
        <taxon>Ricinus</taxon>
    </lineage>
</organism>
<comment type="function">
    <text evidence="1">Promotes mitochondrial protein synthesis. May act as a fidelity factor of the translation reaction, by catalyzing a one-codon backward translocation of tRNAs on improperly translocated ribosomes. Binds to mitochondrial ribosomes in a GTP-dependent manner.</text>
</comment>
<comment type="catalytic activity">
    <reaction evidence="1">
        <text>GTP + H2O = GDP + phosphate + H(+)</text>
        <dbReference type="Rhea" id="RHEA:19669"/>
        <dbReference type="ChEBI" id="CHEBI:15377"/>
        <dbReference type="ChEBI" id="CHEBI:15378"/>
        <dbReference type="ChEBI" id="CHEBI:37565"/>
        <dbReference type="ChEBI" id="CHEBI:43474"/>
        <dbReference type="ChEBI" id="CHEBI:58189"/>
    </reaction>
</comment>
<comment type="subcellular location">
    <subcellularLocation>
        <location evidence="1">Mitochondrion inner membrane</location>
        <topology evidence="1">Peripheral membrane protein</topology>
        <orientation evidence="1">Matrix side</orientation>
    </subcellularLocation>
</comment>
<comment type="miscellaneous">
    <text evidence="1">This protein may be expected to contain an N-terminal transit peptide but none has been predicted.</text>
</comment>
<comment type="similarity">
    <text evidence="2">Belongs to the TRAFAC class translation factor GTPase superfamily. Classic translation factor GTPase family. LepA subfamily.</text>
</comment>
<reference key="1">
    <citation type="journal article" date="2010" name="Nat. Biotechnol.">
        <title>Draft genome sequence of the oilseed species Ricinus communis.</title>
        <authorList>
            <person name="Chan A.P."/>
            <person name="Crabtree J."/>
            <person name="Zhao Q."/>
            <person name="Lorenzi H."/>
            <person name="Orvis J."/>
            <person name="Puiu D."/>
            <person name="Melake-Berhan A."/>
            <person name="Jones K.M."/>
            <person name="Redman J."/>
            <person name="Chen G."/>
            <person name="Cahoon E.B."/>
            <person name="Gedil M."/>
            <person name="Stanke M."/>
            <person name="Haas B.J."/>
            <person name="Wortman J.R."/>
            <person name="Fraser-Liggett C.M."/>
            <person name="Ravel J."/>
            <person name="Rabinowicz P.D."/>
        </authorList>
    </citation>
    <scope>NUCLEOTIDE SEQUENCE [LARGE SCALE GENOMIC DNA]</scope>
    <source>
        <strain>cv. Hale</strain>
    </source>
</reference>
<feature type="chain" id="PRO_0000402849" description="Translation factor GUF1 homolog, mitochondrial">
    <location>
        <begin position="1"/>
        <end position="673"/>
    </location>
</feature>
<feature type="domain" description="tr-type G">
    <location>
        <begin position="68"/>
        <end position="260"/>
    </location>
</feature>
<feature type="binding site" evidence="1">
    <location>
        <begin position="77"/>
        <end position="84"/>
    </location>
    <ligand>
        <name>GTP</name>
        <dbReference type="ChEBI" id="CHEBI:37565"/>
    </ligand>
</feature>
<feature type="binding site" evidence="1">
    <location>
        <begin position="153"/>
        <end position="157"/>
    </location>
    <ligand>
        <name>GTP</name>
        <dbReference type="ChEBI" id="CHEBI:37565"/>
    </ligand>
</feature>
<feature type="binding site" evidence="1">
    <location>
        <begin position="207"/>
        <end position="210"/>
    </location>
    <ligand>
        <name>GTP</name>
        <dbReference type="ChEBI" id="CHEBI:37565"/>
    </ligand>
</feature>